<gene>
    <name type="primary">sds23</name>
    <name type="ORF">SS1G_11950</name>
</gene>
<dbReference type="EMBL" id="CH476640">
    <property type="protein sequence ID" value="EDN97425.1"/>
    <property type="molecule type" value="Genomic_DNA"/>
</dbReference>
<dbReference type="RefSeq" id="XP_001586921.1">
    <property type="nucleotide sequence ID" value="XM_001586871.1"/>
</dbReference>
<dbReference type="SMR" id="A7F3V4"/>
<dbReference type="FunCoup" id="A7F3V4">
    <property type="interactions" value="198"/>
</dbReference>
<dbReference type="STRING" id="665079.A7F3V4"/>
<dbReference type="GeneID" id="5482929"/>
<dbReference type="KEGG" id="ssl:SS1G_11950"/>
<dbReference type="InParanoid" id="A7F3V4"/>
<dbReference type="OMA" id="DWTQISI"/>
<dbReference type="Proteomes" id="UP000001312">
    <property type="component" value="Unassembled WGS sequence"/>
</dbReference>
<dbReference type="GO" id="GO:0005737">
    <property type="term" value="C:cytoplasm"/>
    <property type="evidence" value="ECO:0007669"/>
    <property type="project" value="UniProtKB-SubCell"/>
</dbReference>
<dbReference type="GO" id="GO:0005634">
    <property type="term" value="C:nucleus"/>
    <property type="evidence" value="ECO:0007669"/>
    <property type="project" value="UniProtKB-SubCell"/>
</dbReference>
<dbReference type="GO" id="GO:0004865">
    <property type="term" value="F:protein serine/threonine phosphatase inhibitor activity"/>
    <property type="evidence" value="ECO:0000318"/>
    <property type="project" value="GO_Central"/>
</dbReference>
<dbReference type="GO" id="GO:0042149">
    <property type="term" value="P:cellular response to glucose starvation"/>
    <property type="evidence" value="ECO:0000318"/>
    <property type="project" value="GO_Central"/>
</dbReference>
<dbReference type="GO" id="GO:0030071">
    <property type="term" value="P:regulation of mitotic metaphase/anaphase transition"/>
    <property type="evidence" value="ECO:0007669"/>
    <property type="project" value="InterPro"/>
</dbReference>
<dbReference type="CDD" id="cd02205">
    <property type="entry name" value="CBS_pair_SF"/>
    <property type="match status" value="1"/>
</dbReference>
<dbReference type="Gene3D" id="3.10.580.10">
    <property type="entry name" value="CBS-domain"/>
    <property type="match status" value="2"/>
</dbReference>
<dbReference type="InterPro" id="IPR050511">
    <property type="entry name" value="AMPK_gamma/SDS23_families"/>
</dbReference>
<dbReference type="InterPro" id="IPR000644">
    <property type="entry name" value="CBS_dom"/>
</dbReference>
<dbReference type="InterPro" id="IPR046342">
    <property type="entry name" value="CBS_dom_sf"/>
</dbReference>
<dbReference type="InterPro" id="IPR016711">
    <property type="entry name" value="Ssd23"/>
</dbReference>
<dbReference type="PANTHER" id="PTHR13780">
    <property type="entry name" value="AMP-ACTIVATED PROTEIN KINASE, GAMMA REGULATORY SUBUNIT"/>
    <property type="match status" value="1"/>
</dbReference>
<dbReference type="PANTHER" id="PTHR13780:SF36">
    <property type="entry name" value="CBS DOMAIN-CONTAINING PROTEIN"/>
    <property type="match status" value="1"/>
</dbReference>
<dbReference type="Pfam" id="PF00571">
    <property type="entry name" value="CBS"/>
    <property type="match status" value="2"/>
</dbReference>
<dbReference type="PIRSF" id="PIRSF018148">
    <property type="entry name" value="UCP018148_CBS_YBR214w"/>
    <property type="match status" value="1"/>
</dbReference>
<dbReference type="SMART" id="SM00116">
    <property type="entry name" value="CBS"/>
    <property type="match status" value="3"/>
</dbReference>
<dbReference type="SUPFAM" id="SSF54631">
    <property type="entry name" value="CBS-domain pair"/>
    <property type="match status" value="2"/>
</dbReference>
<dbReference type="PROSITE" id="PS51371">
    <property type="entry name" value="CBS"/>
    <property type="match status" value="3"/>
</dbReference>
<reference key="1">
    <citation type="journal article" date="2011" name="PLoS Genet.">
        <title>Genomic analysis of the necrotrophic fungal pathogens Sclerotinia sclerotiorum and Botrytis cinerea.</title>
        <authorList>
            <person name="Amselem J."/>
            <person name="Cuomo C.A."/>
            <person name="van Kan J.A.L."/>
            <person name="Viaud M."/>
            <person name="Benito E.P."/>
            <person name="Couloux A."/>
            <person name="Coutinho P.M."/>
            <person name="de Vries R.P."/>
            <person name="Dyer P.S."/>
            <person name="Fillinger S."/>
            <person name="Fournier E."/>
            <person name="Gout L."/>
            <person name="Hahn M."/>
            <person name="Kohn L."/>
            <person name="Lapalu N."/>
            <person name="Plummer K.M."/>
            <person name="Pradier J.-M."/>
            <person name="Quevillon E."/>
            <person name="Sharon A."/>
            <person name="Simon A."/>
            <person name="ten Have A."/>
            <person name="Tudzynski B."/>
            <person name="Tudzynski P."/>
            <person name="Wincker P."/>
            <person name="Andrew M."/>
            <person name="Anthouard V."/>
            <person name="Beever R.E."/>
            <person name="Beffa R."/>
            <person name="Benoit I."/>
            <person name="Bouzid O."/>
            <person name="Brault B."/>
            <person name="Chen Z."/>
            <person name="Choquer M."/>
            <person name="Collemare J."/>
            <person name="Cotton P."/>
            <person name="Danchin E.G."/>
            <person name="Da Silva C."/>
            <person name="Gautier A."/>
            <person name="Giraud C."/>
            <person name="Giraud T."/>
            <person name="Gonzalez C."/>
            <person name="Grossetete S."/>
            <person name="Gueldener U."/>
            <person name="Henrissat B."/>
            <person name="Howlett B.J."/>
            <person name="Kodira C."/>
            <person name="Kretschmer M."/>
            <person name="Lappartient A."/>
            <person name="Leroch M."/>
            <person name="Levis C."/>
            <person name="Mauceli E."/>
            <person name="Neuveglise C."/>
            <person name="Oeser B."/>
            <person name="Pearson M."/>
            <person name="Poulain J."/>
            <person name="Poussereau N."/>
            <person name="Quesneville H."/>
            <person name="Rascle C."/>
            <person name="Schumacher J."/>
            <person name="Segurens B."/>
            <person name="Sexton A."/>
            <person name="Silva E."/>
            <person name="Sirven C."/>
            <person name="Soanes D.M."/>
            <person name="Talbot N.J."/>
            <person name="Templeton M."/>
            <person name="Yandava C."/>
            <person name="Yarden O."/>
            <person name="Zeng Q."/>
            <person name="Rollins J.A."/>
            <person name="Lebrun M.-H."/>
            <person name="Dickman M."/>
        </authorList>
    </citation>
    <scope>NUCLEOTIDE SEQUENCE [LARGE SCALE GENOMIC DNA]</scope>
    <source>
        <strain>ATCC 18683 / 1980 / Ss-1</strain>
    </source>
</reference>
<keyword id="KW-0129">CBS domain</keyword>
<keyword id="KW-0963">Cytoplasm</keyword>
<keyword id="KW-0539">Nucleus</keyword>
<keyword id="KW-1185">Reference proteome</keyword>
<keyword id="KW-0677">Repeat</keyword>
<sequence>MADRTVFDSPSRQSTSSPSNNNPASINHRSSFAENLRHSPRAQRHPSFTQAAVQELLNHPPVPKIGDPRFAGRDWRQIHVGELVQETDIHWCELDTDVERATKALIESGPPNVILIRETPDDVTACDSFDYNDLNAYLLVVLGLANPDEEQKETYSQLASKAREHVPIPLRDVITLAKKEPLTTLSESEDLSKAVEIFGSGVHRILVCKPGTTTVVGILSQLKLVKFLWDNGSSFPAIDQLYPTILRDLNIGAQQAIAINGDKPLTEALQLMSNEGLTSIAVVDNAANVVGNISTADTKLLTHTSSLPLLQSSCIHFISVILSERGIGDGKDSFPVFHVNPYSTLAHTVAKLVATRSHRMWVVESASPSPSAPATPSLGYASVVQQPSGGGSVPPSPSFPAVSAAALPGARISGRLTGVITLSDILNLFARTTGLNPMDPNESRARRRRSSSASVRPSMDSSRGDYLDTIREMNQNNLKNIFQYRGLSMRTNNSSELEVEYKKTREIMTRPGAKFQTLLQDLLPDGGKQGMRELKWVNQDFSPPK</sequence>
<proteinExistence type="inferred from homology"/>
<comment type="function">
    <text evidence="1">Involved in DNA replication and cell separation.</text>
</comment>
<comment type="subcellular location">
    <subcellularLocation>
        <location evidence="1">Cytoplasm</location>
    </subcellularLocation>
    <subcellularLocation>
        <location evidence="1">Nucleus</location>
    </subcellularLocation>
</comment>
<comment type="similarity">
    <text evidence="4">Belongs to the SDS23 family.</text>
</comment>
<name>SDS23_SCLS1</name>
<feature type="chain" id="PRO_0000324960" description="Protein sds23">
    <location>
        <begin position="1"/>
        <end position="545"/>
    </location>
</feature>
<feature type="domain" description="CBS 1" evidence="2">
    <location>
        <begin position="83"/>
        <end position="154"/>
    </location>
</feature>
<feature type="domain" description="CBS 2" evidence="2">
    <location>
        <begin position="177"/>
        <end position="234"/>
    </location>
</feature>
<feature type="domain" description="CBS 3" evidence="2">
    <location>
        <begin position="252"/>
        <end position="309"/>
    </location>
</feature>
<feature type="domain" description="CBS 4" evidence="2">
    <location>
        <begin position="366"/>
        <end position="438"/>
    </location>
</feature>
<feature type="region of interest" description="Disordered" evidence="3">
    <location>
        <begin position="1"/>
        <end position="27"/>
    </location>
</feature>
<feature type="region of interest" description="Disordered" evidence="3">
    <location>
        <begin position="433"/>
        <end position="465"/>
    </location>
</feature>
<feature type="compositionally biased region" description="Low complexity" evidence="3">
    <location>
        <begin position="9"/>
        <end position="25"/>
    </location>
</feature>
<feature type="compositionally biased region" description="Low complexity" evidence="3">
    <location>
        <begin position="451"/>
        <end position="461"/>
    </location>
</feature>
<organism>
    <name type="scientific">Sclerotinia sclerotiorum (strain ATCC 18683 / 1980 / Ss-1)</name>
    <name type="common">White mold</name>
    <name type="synonym">Whetzelinia sclerotiorum</name>
    <dbReference type="NCBI Taxonomy" id="665079"/>
    <lineage>
        <taxon>Eukaryota</taxon>
        <taxon>Fungi</taxon>
        <taxon>Dikarya</taxon>
        <taxon>Ascomycota</taxon>
        <taxon>Pezizomycotina</taxon>
        <taxon>Leotiomycetes</taxon>
        <taxon>Helotiales</taxon>
        <taxon>Sclerotiniaceae</taxon>
        <taxon>Sclerotinia</taxon>
    </lineage>
</organism>
<protein>
    <recommendedName>
        <fullName>Protein sds23</fullName>
    </recommendedName>
</protein>
<evidence type="ECO:0000250" key="1"/>
<evidence type="ECO:0000255" key="2">
    <source>
        <dbReference type="PROSITE-ProRule" id="PRU00703"/>
    </source>
</evidence>
<evidence type="ECO:0000256" key="3">
    <source>
        <dbReference type="SAM" id="MobiDB-lite"/>
    </source>
</evidence>
<evidence type="ECO:0000305" key="4"/>
<accession>A7F3V4</accession>